<proteinExistence type="evidence at protein level"/>
<sequence length="116" mass="13383">DSTDGLLVKDKYLCGDLYGEEYGVIFPYLGLKTECLWTIKMDPLYRILLTVRDVHENCNKESLEIIEGPPESSNSRKICDTSHAEYTSCTNTMTVKYTRKPNHPAPDFFLIFRRVL</sequence>
<feature type="chain" id="PRO_0000221457" description="Spermadhesin Z13">
    <location>
        <begin position="1"/>
        <end position="116"/>
    </location>
</feature>
<feature type="domain" description="CUB" evidence="1">
    <location>
        <begin position="14"/>
        <end position="115"/>
    </location>
</feature>
<feature type="disulfide bond">
    <location>
        <begin position="14"/>
        <end position="35"/>
    </location>
</feature>
<feature type="disulfide bond">
    <location>
        <begin position="58"/>
        <end position="79"/>
    </location>
</feature>
<feature type="disulfide bond" description="Interchain">
    <location>
        <position position="89"/>
    </location>
</feature>
<feature type="sequence variant">
    <original>E</original>
    <variation>L</variation>
    <location>
        <position position="56"/>
    </location>
</feature>
<feature type="sequence variant">
    <original>L</original>
    <variation>G</variation>
    <location>
        <position position="63"/>
    </location>
</feature>
<accession>P82292</accession>
<evidence type="ECO:0000255" key="1">
    <source>
        <dbReference type="PROSITE-ProRule" id="PRU00059"/>
    </source>
</evidence>
<evidence type="ECO:0000305" key="2"/>
<comment type="function">
    <text>May be involved in the fertilization process.</text>
</comment>
<comment type="subunit">
    <text>Homodimer; disulfide-linked.</text>
</comment>
<comment type="subcellular location">
    <subcellularLocation>
        <location>Secreted</location>
    </subcellularLocation>
</comment>
<comment type="tissue specificity">
    <text>Seminal plasma.</text>
</comment>
<comment type="similarity">
    <text evidence="2">Belongs to the spermadhesin family.</text>
</comment>
<organism>
    <name type="scientific">Bos taurus</name>
    <name type="common">Bovine</name>
    <dbReference type="NCBI Taxonomy" id="9913"/>
    <lineage>
        <taxon>Eukaryota</taxon>
        <taxon>Metazoa</taxon>
        <taxon>Chordata</taxon>
        <taxon>Craniata</taxon>
        <taxon>Vertebrata</taxon>
        <taxon>Euteleostomi</taxon>
        <taxon>Mammalia</taxon>
        <taxon>Eutheria</taxon>
        <taxon>Laurasiatheria</taxon>
        <taxon>Artiodactyla</taxon>
        <taxon>Ruminantia</taxon>
        <taxon>Pecora</taxon>
        <taxon>Bovidae</taxon>
        <taxon>Bovinae</taxon>
        <taxon>Bos</taxon>
    </lineage>
</organism>
<protein>
    <recommendedName>
        <fullName>Spermadhesin Z13</fullName>
    </recommendedName>
</protein>
<name>Z13_BOVIN</name>
<reference key="1">
    <citation type="journal article" date="2000" name="Eur. J. Biochem.">
        <title>Purification and primary structure of a new bovine spermadhesin.</title>
        <authorList>
            <person name="Tedeschi G."/>
            <person name="Oungre E."/>
            <person name="Mortarino M."/>
            <person name="Negri A."/>
            <person name="Maffeo G."/>
            <person name="Ronchi S."/>
        </authorList>
    </citation>
    <scope>PROTEIN SEQUENCE</scope>
    <source>
        <tissue>Sperm</tissue>
    </source>
</reference>
<dbReference type="SMR" id="P82292"/>
<dbReference type="FunCoup" id="P82292">
    <property type="interactions" value="3"/>
</dbReference>
<dbReference type="STRING" id="9913.ENSBTAP00000010565"/>
<dbReference type="PaxDb" id="9913-ENSBTAP00000010565"/>
<dbReference type="InParanoid" id="P82292"/>
<dbReference type="Proteomes" id="UP000009136">
    <property type="component" value="Unplaced"/>
</dbReference>
<dbReference type="GO" id="GO:0005576">
    <property type="term" value="C:extracellular region"/>
    <property type="evidence" value="ECO:0007669"/>
    <property type="project" value="UniProtKB-SubCell"/>
</dbReference>
<dbReference type="GO" id="GO:0007338">
    <property type="term" value="P:single fertilization"/>
    <property type="evidence" value="ECO:0007669"/>
    <property type="project" value="UniProtKB-KW"/>
</dbReference>
<dbReference type="CDD" id="cd00041">
    <property type="entry name" value="CUB"/>
    <property type="match status" value="1"/>
</dbReference>
<dbReference type="Gene3D" id="2.60.120.290">
    <property type="entry name" value="Spermadhesin, CUB domain"/>
    <property type="match status" value="1"/>
</dbReference>
<dbReference type="InterPro" id="IPR000859">
    <property type="entry name" value="CUB_dom"/>
</dbReference>
<dbReference type="InterPro" id="IPR035914">
    <property type="entry name" value="Sperma_CUB_dom_sf"/>
</dbReference>
<dbReference type="InterPro" id="IPR000124">
    <property type="entry name" value="Spermadhesin"/>
</dbReference>
<dbReference type="Pfam" id="PF00431">
    <property type="entry name" value="CUB"/>
    <property type="match status" value="1"/>
</dbReference>
<dbReference type="SMART" id="SM00042">
    <property type="entry name" value="CUB"/>
    <property type="match status" value="1"/>
</dbReference>
<dbReference type="SUPFAM" id="SSF49854">
    <property type="entry name" value="Spermadhesin, CUB domain"/>
    <property type="match status" value="1"/>
</dbReference>
<dbReference type="PROSITE" id="PS01180">
    <property type="entry name" value="CUB"/>
    <property type="match status" value="1"/>
</dbReference>
<dbReference type="PROSITE" id="PS00985">
    <property type="entry name" value="SPERMADHESIN_1"/>
    <property type="match status" value="1"/>
</dbReference>
<dbReference type="PROSITE" id="PS00986">
    <property type="entry name" value="SPERMADHESIN_2"/>
    <property type="match status" value="1"/>
</dbReference>
<keyword id="KW-0903">Direct protein sequencing</keyword>
<keyword id="KW-1015">Disulfide bond</keyword>
<keyword id="KW-0278">Fertilization</keyword>
<keyword id="KW-1185">Reference proteome</keyword>
<keyword id="KW-0964">Secreted</keyword>